<keyword id="KW-0143">Chaperone</keyword>
<keyword id="KW-0963">Cytoplasm</keyword>
<keyword id="KW-0996">Nickel insertion</keyword>
<keyword id="KW-1185">Reference proteome</keyword>
<comment type="function">
    <text evidence="1">Required for maturation of urease via the functional incorporation of the urease nickel metallocenter.</text>
</comment>
<comment type="subunit">
    <text evidence="1">UreD, UreF and UreG form a complex that acts as a GTP-hydrolysis-dependent molecular chaperone, activating the urease apoprotein by helping to assemble the nickel containing metallocenter of UreC. The UreE protein probably delivers the nickel.</text>
</comment>
<comment type="subcellular location">
    <subcellularLocation>
        <location evidence="1">Cytoplasm</location>
    </subcellularLocation>
</comment>
<comment type="similarity">
    <text evidence="1">Belongs to the UreD family.</text>
</comment>
<proteinExistence type="inferred from homology"/>
<protein>
    <recommendedName>
        <fullName evidence="1">Urease accessory protein UreD</fullName>
    </recommendedName>
</protein>
<evidence type="ECO:0000255" key="1">
    <source>
        <dbReference type="HAMAP-Rule" id="MF_01384"/>
    </source>
</evidence>
<organism>
    <name type="scientific">Ruegeria pomeroyi (strain ATCC 700808 / DSM 15171 / DSS-3)</name>
    <name type="common">Silicibacter pomeroyi</name>
    <dbReference type="NCBI Taxonomy" id="246200"/>
    <lineage>
        <taxon>Bacteria</taxon>
        <taxon>Pseudomonadati</taxon>
        <taxon>Pseudomonadota</taxon>
        <taxon>Alphaproteobacteria</taxon>
        <taxon>Rhodobacterales</taxon>
        <taxon>Roseobacteraceae</taxon>
        <taxon>Ruegeria</taxon>
    </lineage>
</organism>
<name>URED_RUEPO</name>
<reference key="1">
    <citation type="journal article" date="2004" name="Nature">
        <title>Genome sequence of Silicibacter pomeroyi reveals adaptations to the marine environment.</title>
        <authorList>
            <person name="Moran M.A."/>
            <person name="Buchan A."/>
            <person name="Gonzalez J.M."/>
            <person name="Heidelberg J.F."/>
            <person name="Whitman W.B."/>
            <person name="Kiene R.P."/>
            <person name="Henriksen J.R."/>
            <person name="King G.M."/>
            <person name="Belas R."/>
            <person name="Fuqua C."/>
            <person name="Brinkac L.M."/>
            <person name="Lewis M."/>
            <person name="Johri S."/>
            <person name="Weaver B."/>
            <person name="Pai G."/>
            <person name="Eisen J.A."/>
            <person name="Rahe E."/>
            <person name="Sheldon W.M."/>
            <person name="Ye W."/>
            <person name="Miller T.R."/>
            <person name="Carlton J."/>
            <person name="Rasko D.A."/>
            <person name="Paulsen I.T."/>
            <person name="Ren Q."/>
            <person name="Daugherty S.C."/>
            <person name="DeBoy R.T."/>
            <person name="Dodson R.J."/>
            <person name="Durkin A.S."/>
            <person name="Madupu R."/>
            <person name="Nelson W.C."/>
            <person name="Sullivan S.A."/>
            <person name="Rosovitz M.J."/>
            <person name="Haft D.H."/>
            <person name="Selengut J."/>
            <person name="Ward N."/>
        </authorList>
    </citation>
    <scope>NUCLEOTIDE SEQUENCE [LARGE SCALE GENOMIC DNA]</scope>
    <source>
        <strain>ATCC 700808 / DSM 15171 / DSS-3</strain>
    </source>
</reference>
<reference key="2">
    <citation type="journal article" date="2014" name="Stand. Genomic Sci.">
        <title>An updated genome annotation for the model marine bacterium Ruegeria pomeroyi DSS-3.</title>
        <authorList>
            <person name="Rivers A.R."/>
            <person name="Smith C.B."/>
            <person name="Moran M.A."/>
        </authorList>
    </citation>
    <scope>GENOME REANNOTATION</scope>
    <source>
        <strain>ATCC 700808 / DSM 15171 / DSS-3</strain>
    </source>
</reference>
<dbReference type="EMBL" id="CP000031">
    <property type="protein sequence ID" value="AAV94994.1"/>
    <property type="molecule type" value="Genomic_DNA"/>
</dbReference>
<dbReference type="SMR" id="Q5LSQ5"/>
<dbReference type="STRING" id="246200.SPO1711"/>
<dbReference type="PaxDb" id="246200-SPO1711"/>
<dbReference type="DNASU" id="3193571"/>
<dbReference type="KEGG" id="sil:SPO1711"/>
<dbReference type="eggNOG" id="COG0829">
    <property type="taxonomic scope" value="Bacteria"/>
</dbReference>
<dbReference type="HOGENOM" id="CLU_056339_2_0_5"/>
<dbReference type="OrthoDB" id="9798842at2"/>
<dbReference type="Proteomes" id="UP000001023">
    <property type="component" value="Chromosome"/>
</dbReference>
<dbReference type="GO" id="GO:0005737">
    <property type="term" value="C:cytoplasm"/>
    <property type="evidence" value="ECO:0007669"/>
    <property type="project" value="UniProtKB-SubCell"/>
</dbReference>
<dbReference type="GO" id="GO:0016151">
    <property type="term" value="F:nickel cation binding"/>
    <property type="evidence" value="ECO:0007669"/>
    <property type="project" value="UniProtKB-UniRule"/>
</dbReference>
<dbReference type="HAMAP" id="MF_01384">
    <property type="entry name" value="UreD"/>
    <property type="match status" value="1"/>
</dbReference>
<dbReference type="InterPro" id="IPR002669">
    <property type="entry name" value="UreD"/>
</dbReference>
<dbReference type="PANTHER" id="PTHR33643">
    <property type="entry name" value="UREASE ACCESSORY PROTEIN D"/>
    <property type="match status" value="1"/>
</dbReference>
<dbReference type="PANTHER" id="PTHR33643:SF1">
    <property type="entry name" value="UREASE ACCESSORY PROTEIN D"/>
    <property type="match status" value="1"/>
</dbReference>
<dbReference type="Pfam" id="PF01774">
    <property type="entry name" value="UreD"/>
    <property type="match status" value="1"/>
</dbReference>
<feature type="chain" id="PRO_0000340516" description="Urease accessory protein UreD">
    <location>
        <begin position="1"/>
        <end position="257"/>
    </location>
</feature>
<sequence>MELTTKLVGTCSALDRLYQSGSAKCLFPRNSRAGLEAVLLNTAGGVTGGDRLSFSAQVRAGTRLSVTTQACERAYRAQPGETGQVRNHLSVATGARMNWLPQETILYDGSSLDRRLSVEIEPGASLLMVEPLVFGRIEMGESLNDARFCDRIEITRRGRPIFLDATRLQGGIAAHLAKPFIANGAGAMALLVYLAENAEAVLPRLRQMLPECAGASLIGEDLLVMRVLAADSFLLRQSLLPALRLLNNNEIPRCWTI</sequence>
<gene>
    <name evidence="1" type="primary">ureD</name>
    <name type="ordered locus">SPO1711</name>
</gene>
<accession>Q5LSQ5</accession>